<sequence length="476" mass="52801">MSISLTTKLSYGFGAFGKDFAIGIVYMYLMYYYTDVVGLSVGLVGTLFLVARIWDAINDPIMGWIVNATRSRWGKFKPWILIGTLTNSLVLFLLFSAHLFEGTAQVVFVCVTYILWGMTYTIMDIPFWSLVPTITLDKREREQLVPFPRFFASLAGFVTAGITLPFVSYVGGADRGFGFQMFTLVLIAFFIASTIVTLRNVHEVYSSDNGVTAGRPHLTLKTIVGLIYKNDQLSCLLGMALAYNIASNIINGFAIYYFTYVIGDADLFPYYLSYAGAANLLTLIVFPRLVKMLSRRILWAGASVMPVLSCAGLFAMALADIHNAALIVAAGIFLNIGTALFWVLQVIMVADTVDYGEFKLNIRCESIAYSVQTMVVKGGSAFAAFFIALVLGLIGYTPNVAQSAQTLQGMQFIMIVLPVLFFMMTLVLYFRYYRLNGDMLRKIQIHLLDKYRKTPPFVEQPDSPAISVVATSDVKA</sequence>
<accession>P30878</accession>
<feature type="chain" id="PRO_0000170753" description="Melibiose permease">
    <location>
        <begin position="1"/>
        <end position="476"/>
    </location>
</feature>
<feature type="topological domain" description="Cytoplasmic" evidence="5 9 10">
    <location>
        <begin position="1"/>
        <end position="7"/>
    </location>
</feature>
<feature type="transmembrane region" description="Helical" evidence="5 9 10">
    <location>
        <begin position="8"/>
        <end position="30"/>
    </location>
</feature>
<feature type="topological domain" description="Periplasmic" evidence="5 9 10">
    <location>
        <begin position="31"/>
        <end position="41"/>
    </location>
</feature>
<feature type="transmembrane region" description="Helical" evidence="5 9 10">
    <location>
        <begin position="42"/>
        <end position="66"/>
    </location>
</feature>
<feature type="topological domain" description="Cytoplasmic" evidence="5 9 10">
    <location>
        <begin position="67"/>
        <end position="76"/>
    </location>
</feature>
<feature type="transmembrane region" description="Helical" evidence="5 9 10">
    <location>
        <begin position="77"/>
        <end position="97"/>
    </location>
</feature>
<feature type="topological domain" description="Periplasmic" evidence="5 9 10">
    <location>
        <begin position="98"/>
        <end position="104"/>
    </location>
</feature>
<feature type="transmembrane region" description="Helical" evidence="5 9 10">
    <location>
        <begin position="105"/>
        <end position="129"/>
    </location>
</feature>
<feature type="topological domain" description="Cytoplasmic" evidence="5 9 10">
    <location>
        <begin position="130"/>
        <end position="143"/>
    </location>
</feature>
<feature type="transmembrane region" description="Helical" evidence="5 9 10">
    <location>
        <begin position="144"/>
        <end position="167"/>
    </location>
</feature>
<feature type="topological domain" description="Periplasmic" evidence="5 9 10">
    <location>
        <begin position="168"/>
        <end position="177"/>
    </location>
</feature>
<feature type="transmembrane region" description="Helical" evidence="5 9 10">
    <location>
        <begin position="178"/>
        <end position="200"/>
    </location>
</feature>
<feature type="topological domain" description="Cytoplasmic" evidence="5 9 10">
    <location>
        <begin position="201"/>
        <end position="232"/>
    </location>
</feature>
<feature type="transmembrane region" description="Helical" evidence="5 9 10">
    <location>
        <begin position="233"/>
        <end position="255"/>
    </location>
</feature>
<feature type="topological domain" description="Periplasmic" evidence="5 9 10">
    <location>
        <begin position="256"/>
        <end position="266"/>
    </location>
</feature>
<feature type="transmembrane region" description="Helical" evidence="5 9 10">
    <location>
        <begin position="267"/>
        <end position="289"/>
    </location>
</feature>
<feature type="topological domain" description="Cytoplasmic" evidence="5 9 10">
    <location>
        <begin position="290"/>
        <end position="296"/>
    </location>
</feature>
<feature type="transmembrane region" description="Helical" evidence="5 9 10">
    <location>
        <begin position="297"/>
        <end position="318"/>
    </location>
</feature>
<feature type="topological domain" description="Periplasmic" evidence="5 9 10">
    <location>
        <begin position="319"/>
        <end position="323"/>
    </location>
</feature>
<feature type="transmembrane region" description="Helical" evidence="5 9 10">
    <location>
        <begin position="324"/>
        <end position="349"/>
    </location>
</feature>
<feature type="topological domain" description="Cytoplasmic" evidence="5 9 10">
    <location>
        <begin position="350"/>
        <end position="366"/>
    </location>
</feature>
<feature type="transmembrane region" description="Helical" evidence="5 9 10">
    <location>
        <begin position="367"/>
        <end position="394"/>
    </location>
</feature>
<feature type="topological domain" description="Periplasmic" evidence="5 9 10">
    <location>
        <begin position="395"/>
        <end position="408"/>
    </location>
</feature>
<feature type="transmembrane region" description="Helical" evidence="5 9 10">
    <location>
        <begin position="409"/>
        <end position="431"/>
    </location>
</feature>
<feature type="topological domain" description="Cytoplasmic" evidence="5 9 10">
    <location>
        <begin position="432"/>
        <end position="476"/>
    </location>
</feature>
<feature type="binding site" evidence="5 10">
    <location>
        <begin position="18"/>
        <end position="19"/>
    </location>
    <ligand>
        <name>an alpha-D-galactoside</name>
        <dbReference type="ChEBI" id="CHEBI:46953"/>
    </ligand>
</feature>
<feature type="binding site" evidence="5 10">
    <location>
        <position position="124"/>
    </location>
    <ligand>
        <name>an alpha-D-galactoside</name>
        <dbReference type="ChEBI" id="CHEBI:46953"/>
    </ligand>
</feature>
<feature type="binding site" evidence="5 10">
    <location>
        <position position="128"/>
    </location>
    <ligand>
        <name>an alpha-D-galactoside</name>
        <dbReference type="ChEBI" id="CHEBI:46953"/>
    </ligand>
</feature>
<feature type="binding site" evidence="5 10">
    <location>
        <position position="149"/>
    </location>
    <ligand>
        <name>an alpha-D-galactoside</name>
        <dbReference type="ChEBI" id="CHEBI:46953"/>
    </ligand>
</feature>
<feature type="mutagenesis site" description="Loss of transporter activity." evidence="2">
    <original>K</original>
    <variation>C</variation>
    <location>
        <position position="18"/>
    </location>
</feature>
<feature type="mutagenesis site" description="Loss of transporter activity." evidence="2">
    <original>D</original>
    <variation>C</variation>
    <location>
        <position position="19"/>
    </location>
</feature>
<feature type="mutagenesis site" description="Retains weak activity with Na(+), Li(+) or H(+)." evidence="2">
    <original>R</original>
    <variation>C</variation>
    <location>
        <position position="52"/>
    </location>
</feature>
<feature type="mutagenesis site" description="Alters cation selectivity. Retains a low level of H(+)-coupled melibiose transport, but retains only a weak activity with Na(+) or Li(+)." evidence="2">
    <original>D</original>
    <variation>C</variation>
    <location>
        <position position="55"/>
    </location>
</feature>
<feature type="mutagenesis site" description="Alters cation selectivity. Decreases H(+)- and Na(+)-coupled activity, with little effect on Li(+)-coupled melibiose transport." evidence="2">
    <original>N</original>
    <variation>C</variation>
    <location>
        <position position="58"/>
    </location>
</feature>
<feature type="mutagenesis site" description="Alters cation selectivity. Retains only a low level of H(+)-coupled melibiose binding and active transport, but Na(+) or Li(+) does not stimulate either binding or transport." evidence="2">
    <original>D</original>
    <variation>C</variation>
    <location>
        <position position="59"/>
    </location>
</feature>
<feature type="mutagenesis site" description="Loss of transporter activity." evidence="2">
    <original>Y</original>
    <variation>C</variation>
    <location>
        <position position="120"/>
    </location>
</feature>
<feature type="mutagenesis site" description="Alters cation selectivity. Inhibits H(+)- and Na(+)-coupled activity, with little effect on Li(+)-coupled melibiose transport." evidence="2">
    <original>T</original>
    <variation>C</variation>
    <location>
        <position position="121"/>
    </location>
</feature>
<feature type="mutagenesis site" description="Does not affect transporter activity." evidence="2">
    <original>M</original>
    <variation>C</variation>
    <location>
        <position position="123"/>
    </location>
</feature>
<feature type="mutagenesis site" description="Alters cation selectivity. Loss of transporter activity." evidence="2">
    <original>D</original>
    <variation>C</variation>
    <location>
        <position position="124"/>
    </location>
</feature>
<feature type="mutagenesis site" description="Loss of transporter activity." evidence="2">
    <original>W</original>
    <variation>C</variation>
    <location>
        <position position="128"/>
    </location>
</feature>
<feature type="mutagenesis site" description="Retains weak activity with Na(+), Li(+) or H(+)." evidence="2">
    <original>R</original>
    <variation>C</variation>
    <location>
        <position position="149"/>
    </location>
</feature>
<feature type="mutagenesis site" description="Inhibits Na(+)- and Li(+)-coupled activity, with little effect on H(+)-coupled melibiose transport." evidence="2">
    <original>K</original>
    <variation>C</variation>
    <location>
        <position position="377"/>
    </location>
</feature>
<feature type="sequence conflict" description="In Ref. 1; CAA44011." evidence="7" ref="1">
    <original>V</original>
    <variation>G</variation>
    <location>
        <position position="109"/>
    </location>
</feature>
<feature type="helix" evidence="13">
    <location>
        <begin position="5"/>
        <end position="20"/>
    </location>
</feature>
<feature type="helix" evidence="13">
    <location>
        <begin position="23"/>
        <end position="35"/>
    </location>
</feature>
<feature type="helix" evidence="13">
    <location>
        <begin position="41"/>
        <end position="67"/>
    </location>
</feature>
<feature type="turn" evidence="13">
    <location>
        <begin position="72"/>
        <end position="76"/>
    </location>
</feature>
<feature type="helix" evidence="13">
    <location>
        <begin position="77"/>
        <end position="94"/>
    </location>
</feature>
<feature type="helix" evidence="13">
    <location>
        <begin position="95"/>
        <end position="99"/>
    </location>
</feature>
<feature type="helix" evidence="13">
    <location>
        <begin position="103"/>
        <end position="129"/>
    </location>
</feature>
<feature type="helix" evidence="13">
    <location>
        <begin position="130"/>
        <end position="133"/>
    </location>
</feature>
<feature type="helix" evidence="13">
    <location>
        <begin position="138"/>
        <end position="144"/>
    </location>
</feature>
<feature type="helix" evidence="13">
    <location>
        <begin position="146"/>
        <end position="169"/>
    </location>
</feature>
<feature type="turn" evidence="12">
    <location>
        <begin position="171"/>
        <end position="173"/>
    </location>
</feature>
<feature type="helix" evidence="13">
    <location>
        <begin position="175"/>
        <end position="200"/>
    </location>
</feature>
<feature type="strand" evidence="12">
    <location>
        <begin position="209"/>
        <end position="212"/>
    </location>
</feature>
<feature type="helix" evidence="13">
    <location>
        <begin position="220"/>
        <end position="229"/>
    </location>
</feature>
<feature type="helix" evidence="13">
    <location>
        <begin position="231"/>
        <end position="259"/>
    </location>
</feature>
<feature type="helix" evidence="13">
    <location>
        <begin position="268"/>
        <end position="284"/>
    </location>
</feature>
<feature type="helix" evidence="13">
    <location>
        <begin position="287"/>
        <end position="290"/>
    </location>
</feature>
<feature type="strand" evidence="11">
    <location>
        <begin position="291"/>
        <end position="293"/>
    </location>
</feature>
<feature type="helix" evidence="13">
    <location>
        <begin position="295"/>
        <end position="318"/>
    </location>
</feature>
<feature type="helix" evidence="13">
    <location>
        <begin position="324"/>
        <end position="359"/>
    </location>
</feature>
<feature type="helix" evidence="13">
    <location>
        <begin position="365"/>
        <end position="394"/>
    </location>
</feature>
<feature type="helix" evidence="13">
    <location>
        <begin position="404"/>
        <end position="432"/>
    </location>
</feature>
<feature type="helix" evidence="13">
    <location>
        <begin position="438"/>
        <end position="453"/>
    </location>
</feature>
<proteinExistence type="evidence at protein level"/>
<reference key="1">
    <citation type="journal article" date="1992" name="Mol. Gen. Genet.">
        <title>Cloning and sequencing of the melB gene encoding the melibiose permease of Salmonella typhimurium LT2.</title>
        <authorList>
            <person name="Mizushima K."/>
            <person name="Awakihara S."/>
            <person name="Kuroda M."/>
            <person name="Ishikawa T."/>
            <person name="Tsuda M."/>
            <person name="Tsuchiya T."/>
        </authorList>
    </citation>
    <scope>NUCLEOTIDE SEQUENCE [GENOMIC DNA]</scope>
    <source>
        <strain>LT2</strain>
    </source>
</reference>
<reference key="2">
    <citation type="journal article" date="2001" name="Nature">
        <title>Complete genome sequence of Salmonella enterica serovar Typhimurium LT2.</title>
        <authorList>
            <person name="McClelland M."/>
            <person name="Sanderson K.E."/>
            <person name="Spieth J."/>
            <person name="Clifton S.W."/>
            <person name="Latreille P."/>
            <person name="Courtney L."/>
            <person name="Porwollik S."/>
            <person name="Ali J."/>
            <person name="Dante M."/>
            <person name="Du F."/>
            <person name="Hou S."/>
            <person name="Layman D."/>
            <person name="Leonard S."/>
            <person name="Nguyen C."/>
            <person name="Scott K."/>
            <person name="Holmes A."/>
            <person name="Grewal N."/>
            <person name="Mulvaney E."/>
            <person name="Ryan E."/>
            <person name="Sun H."/>
            <person name="Florea L."/>
            <person name="Miller W."/>
            <person name="Stoneking T."/>
            <person name="Nhan M."/>
            <person name="Waterston R."/>
            <person name="Wilson R.K."/>
        </authorList>
    </citation>
    <scope>NUCLEOTIDE SEQUENCE [LARGE SCALE GENOMIC DNA]</scope>
    <source>
        <strain>LT2 / SGSC1412 / ATCC 700720</strain>
    </source>
</reference>
<reference key="3">
    <citation type="journal article" date="2011" name="J. Biol. Chem.">
        <title>Mechanism of melibiose/cation symport of the melibiose permease of Salmonella typhimurium.</title>
        <authorList>
            <person name="Guan L."/>
            <person name="Nurva S."/>
            <person name="Ankeshwarapu S.P."/>
        </authorList>
    </citation>
    <scope>FUNCTION</scope>
    <scope>CATALYTIC ACTIVITY</scope>
    <scope>ACTIVITY REGULATION</scope>
    <source>
        <strain>LT2</strain>
    </source>
</reference>
<reference key="4">
    <citation type="journal article" date="2017" name="J. Gen. Physiol.">
        <title>Thermodynamic cooperativity of cosubstrate binding and cation selectivity of Salmonella typhimurium MelB.</title>
        <authorList>
            <person name="Hariharan P."/>
            <person name="Guan L."/>
        </authorList>
    </citation>
    <scope>FUNCTION</scope>
    <scope>CATALYTIC ACTIVITY</scope>
    <scope>ACTIVITY REGULATION</scope>
</reference>
<reference key="5">
    <citation type="journal article" date="2021" name="J. Gen. Physiol.">
        <title>Cooperative binding ensures the obligatory melibiose/Na+ cotransport in MelB.</title>
        <authorList>
            <person name="Hariharan P."/>
            <person name="Guan L."/>
        </authorList>
    </citation>
    <scope>FUNCTION</scope>
    <scope>CATALYTIC ACTIVITY</scope>
    <scope>REACTION MECHANISM</scope>
    <scope>ACTIVITY REGULATION</scope>
    <scope>DOMAIN</scope>
</reference>
<reference evidence="8" key="6">
    <citation type="journal article" date="2014" name="Nat. Commun.">
        <title>Structure-based mechanism for Na(+)/melibiose symport by MelB.</title>
        <authorList>
            <person name="Ethayathulla A.S."/>
            <person name="Yousef M.S."/>
            <person name="Amin A."/>
            <person name="Leblanc G."/>
            <person name="Kaback H.R."/>
            <person name="Guan L."/>
        </authorList>
    </citation>
    <scope>X-RAY CRYSTALLOGRAPHY (3.35 ANGSTROMS)</scope>
    <scope>FUNCTION</scope>
    <scope>CATALYTIC ACTIVITY</scope>
    <scope>SUBCELLULAR LOCATION</scope>
    <scope>TOPOLOGY</scope>
    <scope>MUTAGENESIS OF LYS-18; ASP-19; ARG-52; ASP-55; ASN-58; ASP-59; TYR-120; THR-121; MET-123; ASP-124; TRP-128; ARG-149 AND LYS-377</scope>
</reference>
<reference evidence="9 10" key="7">
    <citation type="journal article" date="2021" name="Commun. Biol.">
        <title>X-ray crystallography reveals molecular recognition mechanism for sugar binding in a melibiose transporter MelB.</title>
        <authorList>
            <person name="Guan L."/>
            <person name="Hariharan P."/>
        </authorList>
    </citation>
    <scope>X-RAY CRYSTALLOGRAPHY (3.05 ANGSTROMS) OF 2-476 OF MUTANT CYS-59 IN COMPLEXES WITH NITROPHENYL-ALPHA-D-GALACTOSIDE AND DODECYL-BETA-D-MELIBIOSIDE</scope>
    <scope>SUBCELLULAR LOCATION</scope>
    <scope>TOPOLOGY</scope>
    <scope>DOMAIN</scope>
</reference>
<evidence type="ECO:0000269" key="1">
    <source>
    </source>
</evidence>
<evidence type="ECO:0000269" key="2">
    <source>
    </source>
</evidence>
<evidence type="ECO:0000269" key="3">
    <source>
    </source>
</evidence>
<evidence type="ECO:0000269" key="4">
    <source>
    </source>
</evidence>
<evidence type="ECO:0000269" key="5">
    <source>
    </source>
</evidence>
<evidence type="ECO:0000303" key="6">
    <source>
    </source>
</evidence>
<evidence type="ECO:0000305" key="7"/>
<evidence type="ECO:0007744" key="8">
    <source>
        <dbReference type="PDB" id="4M64"/>
    </source>
</evidence>
<evidence type="ECO:0007744" key="9">
    <source>
        <dbReference type="PDB" id="7L16"/>
    </source>
</evidence>
<evidence type="ECO:0007744" key="10">
    <source>
        <dbReference type="PDB" id="7L17"/>
    </source>
</evidence>
<evidence type="ECO:0007829" key="11">
    <source>
        <dbReference type="PDB" id="4M64"/>
    </source>
</evidence>
<evidence type="ECO:0007829" key="12">
    <source>
        <dbReference type="PDB" id="7L17"/>
    </source>
</evidence>
<evidence type="ECO:0007829" key="13">
    <source>
        <dbReference type="PDB" id="8FQ9"/>
    </source>
</evidence>
<gene>
    <name evidence="6" type="primary">melB</name>
    <name type="ordered locus">STM4299</name>
</gene>
<dbReference type="EMBL" id="X62101">
    <property type="protein sequence ID" value="CAA44011.1"/>
    <property type="molecule type" value="Genomic_DNA"/>
</dbReference>
<dbReference type="EMBL" id="AE006468">
    <property type="protein sequence ID" value="AAL23123.1"/>
    <property type="molecule type" value="Genomic_DNA"/>
</dbReference>
<dbReference type="PIR" id="S23576">
    <property type="entry name" value="S23576"/>
</dbReference>
<dbReference type="RefSeq" id="NP_463164.1">
    <property type="nucleotide sequence ID" value="NC_003197.2"/>
</dbReference>
<dbReference type="RefSeq" id="WP_000028075.1">
    <property type="nucleotide sequence ID" value="NC_003197.2"/>
</dbReference>
<dbReference type="PDB" id="4M64">
    <property type="method" value="X-ray"/>
    <property type="resolution" value="3.35 A"/>
    <property type="chains" value="A/B/C/D=1-476"/>
</dbReference>
<dbReference type="PDB" id="7L16">
    <property type="method" value="X-ray"/>
    <property type="resolution" value="3.15 A"/>
    <property type="chains" value="A=2-476"/>
</dbReference>
<dbReference type="PDB" id="7L17">
    <property type="method" value="X-ray"/>
    <property type="resolution" value="3.05 A"/>
    <property type="chains" value="A=2-476"/>
</dbReference>
<dbReference type="PDB" id="8FQ9">
    <property type="method" value="X-ray"/>
    <property type="resolution" value="3.00 A"/>
    <property type="chains" value="A=2-476"/>
</dbReference>
<dbReference type="PDB" id="8FRH">
    <property type="method" value="X-ray"/>
    <property type="resolution" value="3.18 A"/>
    <property type="chains" value="A=2-476"/>
</dbReference>
<dbReference type="PDB" id="8T60">
    <property type="method" value="EM"/>
    <property type="resolution" value="3.29 A"/>
    <property type="chains" value="A=2-476"/>
</dbReference>
<dbReference type="PDBsum" id="4M64"/>
<dbReference type="PDBsum" id="7L16"/>
<dbReference type="PDBsum" id="7L17"/>
<dbReference type="PDBsum" id="8FQ9"/>
<dbReference type="PDBsum" id="8FRH"/>
<dbReference type="PDBsum" id="8T60"/>
<dbReference type="EMDB" id="EMD-41062"/>
<dbReference type="SMR" id="P30878"/>
<dbReference type="STRING" id="99287.STM4299"/>
<dbReference type="PaxDb" id="99287-STM4299"/>
<dbReference type="GeneID" id="1255825"/>
<dbReference type="KEGG" id="stm:STM4299"/>
<dbReference type="PATRIC" id="fig|99287.12.peg.4521"/>
<dbReference type="HOGENOM" id="CLU_027408_0_3_6"/>
<dbReference type="OMA" id="QIMGYIR"/>
<dbReference type="PhylomeDB" id="P30878"/>
<dbReference type="BioCyc" id="SENT99287:STM4299-MONOMER"/>
<dbReference type="EvolutionaryTrace" id="P30878"/>
<dbReference type="Proteomes" id="UP000001014">
    <property type="component" value="Chromosome"/>
</dbReference>
<dbReference type="GO" id="GO:0005886">
    <property type="term" value="C:plasma membrane"/>
    <property type="evidence" value="ECO:0000318"/>
    <property type="project" value="GO_Central"/>
</dbReference>
<dbReference type="GO" id="GO:0015293">
    <property type="term" value="F:symporter activity"/>
    <property type="evidence" value="ECO:0007669"/>
    <property type="project" value="UniProtKB-KW"/>
</dbReference>
<dbReference type="GO" id="GO:0008643">
    <property type="term" value="P:carbohydrate transport"/>
    <property type="evidence" value="ECO:0007669"/>
    <property type="project" value="InterPro"/>
</dbReference>
<dbReference type="GO" id="GO:0006814">
    <property type="term" value="P:sodium ion transport"/>
    <property type="evidence" value="ECO:0007669"/>
    <property type="project" value="InterPro"/>
</dbReference>
<dbReference type="GO" id="GO:0055085">
    <property type="term" value="P:transmembrane transport"/>
    <property type="evidence" value="ECO:0000318"/>
    <property type="project" value="GO_Central"/>
</dbReference>
<dbReference type="CDD" id="cd17332">
    <property type="entry name" value="MFS_MelB_like"/>
    <property type="match status" value="1"/>
</dbReference>
<dbReference type="FunFam" id="1.20.1250.20:FF:000258">
    <property type="entry name" value="Melibiose carrier protein"/>
    <property type="match status" value="1"/>
</dbReference>
<dbReference type="Gene3D" id="1.20.1250.20">
    <property type="entry name" value="MFS general substrate transporter like domains"/>
    <property type="match status" value="1"/>
</dbReference>
<dbReference type="InterPro" id="IPR039672">
    <property type="entry name" value="MFS_2"/>
</dbReference>
<dbReference type="InterPro" id="IPR036259">
    <property type="entry name" value="MFS_trans_sf"/>
</dbReference>
<dbReference type="InterPro" id="IPR001927">
    <property type="entry name" value="Na/Gal_symport"/>
</dbReference>
<dbReference type="InterPro" id="IPR018043">
    <property type="entry name" value="Na/Gal_symport_CS"/>
</dbReference>
<dbReference type="NCBIfam" id="TIGR00792">
    <property type="entry name" value="gph"/>
    <property type="match status" value="1"/>
</dbReference>
<dbReference type="NCBIfam" id="NF007749">
    <property type="entry name" value="PRK10429.1"/>
    <property type="match status" value="1"/>
</dbReference>
<dbReference type="PANTHER" id="PTHR11328">
    <property type="entry name" value="MAJOR FACILITATOR SUPERFAMILY DOMAIN-CONTAINING PROTEIN"/>
    <property type="match status" value="1"/>
</dbReference>
<dbReference type="PANTHER" id="PTHR11328:SF36">
    <property type="entry name" value="MELIBIOSE PERMEASE"/>
    <property type="match status" value="1"/>
</dbReference>
<dbReference type="Pfam" id="PF13347">
    <property type="entry name" value="MFS_2"/>
    <property type="match status" value="1"/>
</dbReference>
<dbReference type="SUPFAM" id="SSF103473">
    <property type="entry name" value="MFS general substrate transporter"/>
    <property type="match status" value="1"/>
</dbReference>
<dbReference type="PROSITE" id="PS00872">
    <property type="entry name" value="NA_GALACTOSIDE_SYMP"/>
    <property type="match status" value="1"/>
</dbReference>
<organism>
    <name type="scientific">Salmonella typhimurium (strain LT2 / SGSC1412 / ATCC 700720)</name>
    <dbReference type="NCBI Taxonomy" id="99287"/>
    <lineage>
        <taxon>Bacteria</taxon>
        <taxon>Pseudomonadati</taxon>
        <taxon>Pseudomonadota</taxon>
        <taxon>Gammaproteobacteria</taxon>
        <taxon>Enterobacterales</taxon>
        <taxon>Enterobacteriaceae</taxon>
        <taxon>Salmonella</taxon>
    </lineage>
</organism>
<name>MELB_SALTY</name>
<keyword id="KW-0002">3D-structure</keyword>
<keyword id="KW-0997">Cell inner membrane</keyword>
<keyword id="KW-1003">Cell membrane</keyword>
<keyword id="KW-0472">Membrane</keyword>
<keyword id="KW-1185">Reference proteome</keyword>
<keyword id="KW-0762">Sugar transport</keyword>
<keyword id="KW-0769">Symport</keyword>
<keyword id="KW-0812">Transmembrane</keyword>
<keyword id="KW-1133">Transmembrane helix</keyword>
<keyword id="KW-0813">Transport</keyword>
<protein>
    <recommendedName>
        <fullName evidence="6">Melibiose permease</fullName>
    </recommendedName>
    <alternativeName>
        <fullName>Melibiose carrier</fullName>
    </alternativeName>
    <alternativeName>
        <fullName>Melibiose transporter</fullName>
    </alternativeName>
    <alternativeName>
        <fullName evidence="7">Melibiose/cation symporter</fullName>
    </alternativeName>
    <alternativeName>
        <fullName evidence="6">Na+ (Li+)/melibiose symporter</fullName>
    </alternativeName>
    <alternativeName>
        <fullName>Thiomethylgalactoside permease II</fullName>
    </alternativeName>
</protein>
<comment type="function">
    <text evidence="1 2 3 4">Mediates the transport of melibiose and other galactosides by a symport mechanism (PubMed:21148559, PubMed:24389923, PubMed:29054867, PubMed:34110360). Can use sodium, lithium and protons as coupling cations, with a preference for sodium and lithium (PubMed:21148559, PubMed:24389923, PubMed:29054867). The use of Na(+) as coupling ion for sugar transport is based not on ion selectivity but on competitive binding under physiological conditions, because of a much higher Na(+) concentration under physiological conditions (PubMed:29054867).</text>
</comment>
<comment type="catalytic activity">
    <reaction evidence="1 2 3 4">
        <text>melibiose(in) + Na(+)(in) = melibiose(out) + Na(+)(out)</text>
        <dbReference type="Rhea" id="RHEA:28851"/>
        <dbReference type="ChEBI" id="CHEBI:28053"/>
        <dbReference type="ChEBI" id="CHEBI:29101"/>
    </reaction>
</comment>
<comment type="catalytic activity">
    <reaction evidence="1 2">
        <text>melibiose(in) + Li(+)(in) = melibiose(out) + Li(+)(out)</text>
        <dbReference type="Rhea" id="RHEA:28847"/>
        <dbReference type="ChEBI" id="CHEBI:28053"/>
        <dbReference type="ChEBI" id="CHEBI:49713"/>
    </reaction>
</comment>
<comment type="catalytic activity">
    <reaction evidence="1 2 3">
        <text>melibiose(in) + H(+)(in) = melibiose(out) + H(+)(out)</text>
        <dbReference type="Rhea" id="RHEA:28855"/>
        <dbReference type="ChEBI" id="CHEBI:15378"/>
        <dbReference type="ChEBI" id="CHEBI:28053"/>
    </reaction>
</comment>
<comment type="activity regulation">
    <text evidence="1 3 4">Binding of Na(+) and melibiose is cooperative, the binding affinity for one substrate is increased by the presence of the other (PubMed:29054867, PubMed:34110360). With binding of one substrate (either Na(+) or melibiose), MelB favors open conformations (likely outward facing), whereas the cooperative binding of both substrates induces cavity closure. Thus, cooperative binding is the key that regulates the alternating-access process and ensures the obligatory cotransport as the core mechanism for symport (PubMed:34110360). Melibiose uptake is inhibited by valinomycin (PubMed:21148559).</text>
</comment>
<comment type="subcellular location">
    <subcellularLocation>
        <location evidence="2 5">Cell inner membrane</location>
        <topology evidence="2 5">Multi-pass membrane protein</topology>
    </subcellularLocation>
</comment>
<comment type="domain">
    <text evidence="4 5">Apoprotein is apparently conformationally labile and readily converts to different states, including inward-facing conformations for substrate access (PubMed:34110360). Contains a conserved cation-binding pocket, which directly connects to the sugar specificity pocket (PubMed:34341464).</text>
</comment>
<comment type="similarity">
    <text evidence="7">Belongs to the sodium:galactoside symporter (TC 2.A.2) family.</text>
</comment>